<proteinExistence type="inferred from homology"/>
<dbReference type="EC" id="3.4.21.-"/>
<dbReference type="EMBL" id="CP000736">
    <property type="protein sequence ID" value="ABR52737.1"/>
    <property type="molecule type" value="Genomic_DNA"/>
</dbReference>
<dbReference type="SMR" id="A6U2R9"/>
<dbReference type="MEROPS" id="S01.503"/>
<dbReference type="KEGG" id="sah:SaurJH1_1899"/>
<dbReference type="HOGENOM" id="CLU_073589_2_0_9"/>
<dbReference type="GO" id="GO:0005576">
    <property type="term" value="C:extracellular region"/>
    <property type="evidence" value="ECO:0007669"/>
    <property type="project" value="UniProtKB-SubCell"/>
</dbReference>
<dbReference type="GO" id="GO:0004252">
    <property type="term" value="F:serine-type endopeptidase activity"/>
    <property type="evidence" value="ECO:0007669"/>
    <property type="project" value="InterPro"/>
</dbReference>
<dbReference type="GO" id="GO:0006508">
    <property type="term" value="P:proteolysis"/>
    <property type="evidence" value="ECO:0007669"/>
    <property type="project" value="UniProtKB-KW"/>
</dbReference>
<dbReference type="Gene3D" id="2.40.10.10">
    <property type="entry name" value="Trypsin-like serine proteases"/>
    <property type="match status" value="2"/>
</dbReference>
<dbReference type="InterPro" id="IPR009003">
    <property type="entry name" value="Peptidase_S1_PA"/>
</dbReference>
<dbReference type="InterPro" id="IPR043504">
    <property type="entry name" value="Peptidase_S1_PA_chymotrypsin"/>
</dbReference>
<dbReference type="InterPro" id="IPR008256">
    <property type="entry name" value="Peptidase_S1B"/>
</dbReference>
<dbReference type="InterPro" id="IPR008353">
    <property type="entry name" value="Peptidase_S1B_tx"/>
</dbReference>
<dbReference type="InterPro" id="IPR001254">
    <property type="entry name" value="Trypsin_dom"/>
</dbReference>
<dbReference type="InterPro" id="IPR028301">
    <property type="entry name" value="V8_his_AS"/>
</dbReference>
<dbReference type="PANTHER" id="PTHR43019:SF23">
    <property type="entry name" value="PROTEASE DO-LIKE 5, CHLOROPLASTIC"/>
    <property type="match status" value="1"/>
</dbReference>
<dbReference type="PANTHER" id="PTHR43019">
    <property type="entry name" value="SERINE ENDOPROTEASE DEGS"/>
    <property type="match status" value="1"/>
</dbReference>
<dbReference type="Pfam" id="PF00089">
    <property type="entry name" value="Trypsin"/>
    <property type="match status" value="1"/>
</dbReference>
<dbReference type="PRINTS" id="PR01774">
    <property type="entry name" value="EXFOLTOXIN"/>
</dbReference>
<dbReference type="PRINTS" id="PR00839">
    <property type="entry name" value="V8PROTEASE"/>
</dbReference>
<dbReference type="SUPFAM" id="SSF50494">
    <property type="entry name" value="Trypsin-like serine proteases"/>
    <property type="match status" value="1"/>
</dbReference>
<dbReference type="PROSITE" id="PS00672">
    <property type="entry name" value="V8_HIS"/>
    <property type="match status" value="1"/>
</dbReference>
<sequence length="235" mass="25441">MNKNVMVKGLTALTILTSLGFAENISNQPHSIAKAEKNVKEITDATKAPYNSVVAFAGGTGVVVGKNTIVTNKHIAKSNDIFKNRVAAHYSSKGKGGGNYDVKDIVEYPGKEDLAIVHVHETSTEGLNFNKNVSYTKFAEGAKAKDRISVIGYPKGAQTKYKMFESTGTINHISGTFIEFDAYAQPGNSGSPVLNSKHELIGILYAGSGKDESEKNFGVYFTPQLKEFIQNNIEK</sequence>
<keyword id="KW-0378">Hydrolase</keyword>
<keyword id="KW-0645">Protease</keyword>
<keyword id="KW-0964">Secreted</keyword>
<keyword id="KW-0720">Serine protease</keyword>
<keyword id="KW-0732">Signal</keyword>
<gene>
    <name type="primary">splA</name>
    <name type="ordered locus">SaurJH1_1899</name>
</gene>
<reference key="1">
    <citation type="submission" date="2007-06" db="EMBL/GenBank/DDBJ databases">
        <title>Complete sequence of chromosome of Staphylococcus aureus subsp. aureus JH1.</title>
        <authorList>
            <consortium name="US DOE Joint Genome Institute"/>
            <person name="Copeland A."/>
            <person name="Lucas S."/>
            <person name="Lapidus A."/>
            <person name="Barry K."/>
            <person name="Detter J.C."/>
            <person name="Glavina del Rio T."/>
            <person name="Hammon N."/>
            <person name="Israni S."/>
            <person name="Dalin E."/>
            <person name="Tice H."/>
            <person name="Pitluck S."/>
            <person name="Chain P."/>
            <person name="Malfatti S."/>
            <person name="Shin M."/>
            <person name="Vergez L."/>
            <person name="Schmutz J."/>
            <person name="Larimer F."/>
            <person name="Land M."/>
            <person name="Hauser L."/>
            <person name="Kyrpides N."/>
            <person name="Ivanova N."/>
            <person name="Tomasz A."/>
            <person name="Richardson P."/>
        </authorList>
    </citation>
    <scope>NUCLEOTIDE SEQUENCE [LARGE SCALE GENOMIC DNA]</scope>
    <source>
        <strain>JH1</strain>
    </source>
</reference>
<name>SPLA_STAA2</name>
<protein>
    <recommendedName>
        <fullName>Serine protease SplA</fullName>
        <ecNumber>3.4.21.-</ecNumber>
    </recommendedName>
</protein>
<organism>
    <name type="scientific">Staphylococcus aureus (strain JH1)</name>
    <dbReference type="NCBI Taxonomy" id="359787"/>
    <lineage>
        <taxon>Bacteria</taxon>
        <taxon>Bacillati</taxon>
        <taxon>Bacillota</taxon>
        <taxon>Bacilli</taxon>
        <taxon>Bacillales</taxon>
        <taxon>Staphylococcaceae</taxon>
        <taxon>Staphylococcus</taxon>
    </lineage>
</organism>
<comment type="subcellular location">
    <subcellularLocation>
        <location evidence="1">Secreted</location>
    </subcellularLocation>
</comment>
<comment type="similarity">
    <text evidence="2">Belongs to the peptidase S1B family.</text>
</comment>
<feature type="signal peptide" evidence="1">
    <location>
        <begin position="1"/>
        <end position="35"/>
    </location>
</feature>
<feature type="chain" id="PRO_5000257051" description="Serine protease SplA">
    <location>
        <begin position="36"/>
        <end position="235"/>
    </location>
</feature>
<feature type="active site" description="Charge relay system" evidence="1">
    <location>
        <position position="74"/>
    </location>
</feature>
<feature type="active site" description="Charge relay system" evidence="1">
    <location>
        <position position="113"/>
    </location>
</feature>
<feature type="active site" description="Charge relay system" evidence="1">
    <location>
        <position position="189"/>
    </location>
</feature>
<evidence type="ECO:0000250" key="1"/>
<evidence type="ECO:0000305" key="2"/>
<accession>A6U2R9</accession>